<accession>A0A150XSC5</accession>
<protein>
    <recommendedName>
        <fullName evidence="3">c-di-GMP synthase</fullName>
        <ecNumber evidence="1">2.7.7.65</ecNumber>
    </recommendedName>
    <alternativeName>
        <fullName evidence="3">ReCdnE</fullName>
    </alternativeName>
    <alternativeName>
        <fullName evidence="4">ReCdnG</fullName>
    </alternativeName>
    <alternativeName>
        <fullName>cGAS/DncV-like nucleotidyltransferase</fullName>
        <shortName>CD-NTase</shortName>
    </alternativeName>
</protein>
<sequence length="376" mass="43174">MLITSNAKTQLEDTLAKMAEAAELDKTRWSRLNTAYEAISKWLSDDPEFFGGVEIEIYPQGSVSIGTTTKPYGKTEFDLDVVIHIKLLSSNYDPKTIFNEVVRRLNENETYRKICEPKSRCVRLNYQGDFHLDVVPGCMVIIYNHELIDITDQKNEIWLRSSPKGYQKWFLDIANRVELTLLEMTFSAHKVEIEEYAKKKPLQRAVQLIKMRRNIYFDQNPENAPTSIILTTLAAQFYEGQSSISETFEGIISKLKNHIETLFPNRPFELPNPVNPSENLADIWVDKPELYKHFISFINNLHNEWQDLKKAHGIEEEAILMKGMFGNDPYIKAMEARAETVNQKRGNGLGILATGVMVDRAVEKSLPVMPNTFYGD</sequence>
<organism>
    <name type="scientific">Roseivirga ehrenbergii (strain DSM 102268 / JCM 13514 / KCTC 12282 / NCIMB 14502 / KMM 6017)</name>
    <dbReference type="NCBI Taxonomy" id="279360"/>
    <lineage>
        <taxon>Bacteria</taxon>
        <taxon>Pseudomonadati</taxon>
        <taxon>Bacteroidota</taxon>
        <taxon>Cytophagia</taxon>
        <taxon>Cytophagales</taxon>
        <taxon>Roseivirgaceae</taxon>
        <taxon>Roseivirga</taxon>
    </lineage>
</organism>
<evidence type="ECO:0000269" key="1">
    <source>
    </source>
</evidence>
<evidence type="ECO:0000303" key="2">
    <source>
    </source>
</evidence>
<evidence type="ECO:0000303" key="3">
    <source>
    </source>
</evidence>
<evidence type="ECO:0000305" key="4"/>
<evidence type="ECO:0000305" key="5">
    <source>
    </source>
</evidence>
<name>CDNG_ROSEK</name>
<proteinExistence type="evidence at protein level"/>
<dbReference type="EC" id="2.7.7.65" evidence="1"/>
<dbReference type="EMBL" id="LQZQ01000002">
    <property type="protein sequence ID" value="KYG81647.1"/>
    <property type="molecule type" value="Genomic_DNA"/>
</dbReference>
<dbReference type="RefSeq" id="WP_062588800.1">
    <property type="nucleotide sequence ID" value="NZ_LQZQ01000002.1"/>
</dbReference>
<dbReference type="SMR" id="A0A150XSC5"/>
<dbReference type="STRING" id="279360.MB14_13780"/>
<dbReference type="OrthoDB" id="1118920at2"/>
<dbReference type="Proteomes" id="UP000075583">
    <property type="component" value="Unassembled WGS sequence"/>
</dbReference>
<dbReference type="GO" id="GO:0052621">
    <property type="term" value="F:diguanylate cyclase activity"/>
    <property type="evidence" value="ECO:0007669"/>
    <property type="project" value="UniProtKB-EC"/>
</dbReference>
<dbReference type="GO" id="GO:0005525">
    <property type="term" value="F:GTP binding"/>
    <property type="evidence" value="ECO:0007669"/>
    <property type="project" value="UniProtKB-KW"/>
</dbReference>
<dbReference type="GO" id="GO:0051607">
    <property type="term" value="P:defense response to virus"/>
    <property type="evidence" value="ECO:0007669"/>
    <property type="project" value="UniProtKB-KW"/>
</dbReference>
<dbReference type="CDD" id="cd05400">
    <property type="entry name" value="NT_2-5OAS_ClassI-CCAase"/>
    <property type="match status" value="1"/>
</dbReference>
<dbReference type="InterPro" id="IPR006116">
    <property type="entry name" value="NT_2-5OAS_ClassI-CCAase"/>
</dbReference>
<dbReference type="Pfam" id="PF18144">
    <property type="entry name" value="SMODS"/>
    <property type="match status" value="1"/>
</dbReference>
<reference key="1">
    <citation type="submission" date="2016-01" db="EMBL/GenBank/DDBJ databases">
        <title>Genome sequencing of Roseivirga ehrenbergii KMM 6017.</title>
        <authorList>
            <person name="Selvaratnam C."/>
            <person name="Thevarajoo S."/>
            <person name="Goh K.M."/>
            <person name="Ee R."/>
            <person name="Chan K.-G."/>
            <person name="Chong C.S."/>
        </authorList>
    </citation>
    <scope>NUCLEOTIDE SEQUENCE [LARGE SCALE GENOMIC DNA]</scope>
    <source>
        <strain>DSM 102268 / JCM 13514 / KCTC 12282 / NCIMB 14502 / KMM 6017</strain>
    </source>
</reference>
<reference key="2">
    <citation type="journal article" date="2020" name="Nature">
        <title>STING cyclic dinucleotide sensing originated in bacteria.</title>
        <authorList>
            <person name="Morehouse B.R."/>
            <person name="Govande A.A."/>
            <person name="Millman A."/>
            <person name="Keszei A.F.A."/>
            <person name="Lowey B."/>
            <person name="Ofir G."/>
            <person name="Shao S."/>
            <person name="Sorek R."/>
            <person name="Kranzusch P.J."/>
        </authorList>
    </citation>
    <scope>FUNCTION</scope>
    <scope>CATALYTIC ACTIVITY</scope>
    <scope>SUBSTRATE SPECIFICITY</scope>
</reference>
<reference key="3">
    <citation type="journal article" date="2020" name="Nat. Microbiol.">
        <title>Diversity and classification of cyclic-oligonucleotide-based anti-phage signalling systems.</title>
        <authorList>
            <person name="Millman A."/>
            <person name="Melamed S."/>
            <person name="Amitai G."/>
            <person name="Sorek R."/>
        </authorList>
    </citation>
    <scope>CLASSIFICATION AND NOMENCLATURE</scope>
</reference>
<feature type="chain" id="PRO_0000451885" description="c-di-GMP synthase">
    <location>
        <begin position="1"/>
        <end position="376"/>
    </location>
</feature>
<keyword id="KW-0051">Antiviral defense</keyword>
<keyword id="KW-0342">GTP-binding</keyword>
<keyword id="KW-0547">Nucleotide-binding</keyword>
<keyword id="KW-0548">Nucleotidyltransferase</keyword>
<keyword id="KW-0808">Transferase</keyword>
<gene>
    <name evidence="3" type="primary">cdnG</name>
    <name type="ORF">MB14_13780</name>
</gene>
<comment type="function">
    <text evidence="1 2 5">Cyclic nucleotide synthase (second messenger synthase) of a CBASS antivirus system (PubMed:32877915). CBASS (cyclic oligonucleotide-based antiphage signaling system) provides immunity against bacteriophage. The CD-NTase protein synthesizes cyclic nucleotides in response to infection; these serve as specific second messenger signals. The signals activate a diverse range of effectors, leading to bacterial cell death and thus abortive phage infection. A type I-D CBASS(GG) system (PubMed:32839535).</text>
</comment>
<comment type="function">
    <text evidence="1">Cyclic dinucleotide synthase that catalyzes the synthesis of c-di-GMP, has no activity with other NTP substrates.</text>
</comment>
<comment type="catalytic activity">
    <reaction evidence="1">
        <text>2 GTP = 3',3'-c-di-GMP + 2 diphosphate</text>
        <dbReference type="Rhea" id="RHEA:24898"/>
        <dbReference type="ChEBI" id="CHEBI:33019"/>
        <dbReference type="ChEBI" id="CHEBI:37565"/>
        <dbReference type="ChEBI" id="CHEBI:58805"/>
        <dbReference type="EC" id="2.7.7.65"/>
    </reaction>
</comment>
<comment type="miscellaneous">
    <text evidence="5">Bacteria with this enzyme do not have other c-di-GMP synthase enzymes (no GGDEF or EAL-domain containing proteins), suggesting this second messenger has been co-opted for CBASS signaling via STING activation.</text>
</comment>
<comment type="similarity">
    <text evidence="4">Belongs to the CD-NTase family. G05 subfamily.</text>
</comment>